<dbReference type="EMBL" id="AL035680">
    <property type="protein sequence ID" value="CAB38849.1"/>
    <property type="molecule type" value="Genomic_DNA"/>
</dbReference>
<dbReference type="EMBL" id="AL161566">
    <property type="protein sequence ID" value="CAB79574.1"/>
    <property type="molecule type" value="Genomic_DNA"/>
</dbReference>
<dbReference type="EMBL" id="CP002687">
    <property type="protein sequence ID" value="AEE85311.1"/>
    <property type="molecule type" value="Genomic_DNA"/>
</dbReference>
<dbReference type="EMBL" id="DQ446871">
    <property type="protein sequence ID" value="ABE66092.1"/>
    <property type="molecule type" value="mRNA"/>
</dbReference>
<dbReference type="PIR" id="T06049">
    <property type="entry name" value="T06049"/>
</dbReference>
<dbReference type="RefSeq" id="NP_194449.1">
    <property type="nucleotide sequence ID" value="NM_118853.2"/>
</dbReference>
<dbReference type="SMR" id="Q9T048"/>
<dbReference type="FunCoup" id="Q9T048">
    <property type="interactions" value="16"/>
</dbReference>
<dbReference type="STRING" id="3702.Q9T048"/>
<dbReference type="PaxDb" id="3702-AT4G27190.1"/>
<dbReference type="EnsemblPlants" id="AT4G27190.1">
    <property type="protein sequence ID" value="AT4G27190.1"/>
    <property type="gene ID" value="AT4G27190"/>
</dbReference>
<dbReference type="GeneID" id="828827"/>
<dbReference type="Gramene" id="AT4G27190.1">
    <property type="protein sequence ID" value="AT4G27190.1"/>
    <property type="gene ID" value="AT4G27190"/>
</dbReference>
<dbReference type="KEGG" id="ath:AT4G27190"/>
<dbReference type="Araport" id="AT4G27190"/>
<dbReference type="TAIR" id="AT4G27190"/>
<dbReference type="eggNOG" id="KOG4658">
    <property type="taxonomic scope" value="Eukaryota"/>
</dbReference>
<dbReference type="HOGENOM" id="CLU_000427_2_0_1"/>
<dbReference type="InParanoid" id="Q9T048"/>
<dbReference type="OMA" id="SSQDDCH"/>
<dbReference type="PhylomeDB" id="Q9T048"/>
<dbReference type="PRO" id="PR:Q9T048"/>
<dbReference type="Proteomes" id="UP000006548">
    <property type="component" value="Chromosome 4"/>
</dbReference>
<dbReference type="ExpressionAtlas" id="Q9T048">
    <property type="expression patterns" value="baseline and differential"/>
</dbReference>
<dbReference type="GO" id="GO:0043531">
    <property type="term" value="F:ADP binding"/>
    <property type="evidence" value="ECO:0007669"/>
    <property type="project" value="InterPro"/>
</dbReference>
<dbReference type="GO" id="GO:0005524">
    <property type="term" value="F:ATP binding"/>
    <property type="evidence" value="ECO:0007669"/>
    <property type="project" value="UniProtKB-KW"/>
</dbReference>
<dbReference type="GO" id="GO:0006952">
    <property type="term" value="P:defense response"/>
    <property type="evidence" value="ECO:0007669"/>
    <property type="project" value="UniProtKB-KW"/>
</dbReference>
<dbReference type="FunFam" id="3.40.50.300:FF:001091">
    <property type="entry name" value="Probable disease resistance protein At1g61300"/>
    <property type="match status" value="1"/>
</dbReference>
<dbReference type="FunFam" id="1.10.10.10:FF:000322">
    <property type="entry name" value="Probable disease resistance protein At1g63360"/>
    <property type="match status" value="1"/>
</dbReference>
<dbReference type="FunFam" id="1.10.8.430:FF:000003">
    <property type="entry name" value="Probable disease resistance protein At5g66910"/>
    <property type="match status" value="1"/>
</dbReference>
<dbReference type="Gene3D" id="1.10.8.430">
    <property type="entry name" value="Helical domain of apoptotic protease-activating factors"/>
    <property type="match status" value="1"/>
</dbReference>
<dbReference type="Gene3D" id="3.40.50.300">
    <property type="entry name" value="P-loop containing nucleotide triphosphate hydrolases"/>
    <property type="match status" value="1"/>
</dbReference>
<dbReference type="Gene3D" id="3.80.10.10">
    <property type="entry name" value="Ribonuclease Inhibitor"/>
    <property type="match status" value="2"/>
</dbReference>
<dbReference type="Gene3D" id="1.10.10.10">
    <property type="entry name" value="Winged helix-like DNA-binding domain superfamily/Winged helix DNA-binding domain"/>
    <property type="match status" value="1"/>
</dbReference>
<dbReference type="InterPro" id="IPR042197">
    <property type="entry name" value="Apaf_helical"/>
</dbReference>
<dbReference type="InterPro" id="IPR001611">
    <property type="entry name" value="Leu-rich_rpt"/>
</dbReference>
<dbReference type="InterPro" id="IPR032675">
    <property type="entry name" value="LRR_dom_sf"/>
</dbReference>
<dbReference type="InterPro" id="IPR002182">
    <property type="entry name" value="NB-ARC"/>
</dbReference>
<dbReference type="InterPro" id="IPR027417">
    <property type="entry name" value="P-loop_NTPase"/>
</dbReference>
<dbReference type="InterPro" id="IPR050905">
    <property type="entry name" value="Plant_NBS-LRR"/>
</dbReference>
<dbReference type="InterPro" id="IPR036388">
    <property type="entry name" value="WH-like_DNA-bd_sf"/>
</dbReference>
<dbReference type="PANTHER" id="PTHR33463:SF202">
    <property type="entry name" value="NB-ARC DOMAIN-CONTAINING PROTEIN"/>
    <property type="match status" value="1"/>
</dbReference>
<dbReference type="PANTHER" id="PTHR33463">
    <property type="entry name" value="NB-ARC DOMAIN-CONTAINING PROTEIN-RELATED"/>
    <property type="match status" value="1"/>
</dbReference>
<dbReference type="Pfam" id="PF23247">
    <property type="entry name" value="LRR_RPS2"/>
    <property type="match status" value="1"/>
</dbReference>
<dbReference type="Pfam" id="PF00931">
    <property type="entry name" value="NB-ARC"/>
    <property type="match status" value="1"/>
</dbReference>
<dbReference type="Pfam" id="PF23559">
    <property type="entry name" value="WH_DRP"/>
    <property type="match status" value="1"/>
</dbReference>
<dbReference type="PRINTS" id="PR00364">
    <property type="entry name" value="DISEASERSIST"/>
</dbReference>
<dbReference type="SUPFAM" id="SSF52058">
    <property type="entry name" value="L domain-like"/>
    <property type="match status" value="1"/>
</dbReference>
<dbReference type="SUPFAM" id="SSF52540">
    <property type="entry name" value="P-loop containing nucleoside triphosphate hydrolases"/>
    <property type="match status" value="1"/>
</dbReference>
<dbReference type="PROSITE" id="PS51450">
    <property type="entry name" value="LRR"/>
    <property type="match status" value="6"/>
</dbReference>
<organism>
    <name type="scientific">Arabidopsis thaliana</name>
    <name type="common">Mouse-ear cress</name>
    <dbReference type="NCBI Taxonomy" id="3702"/>
    <lineage>
        <taxon>Eukaryota</taxon>
        <taxon>Viridiplantae</taxon>
        <taxon>Streptophyta</taxon>
        <taxon>Embryophyta</taxon>
        <taxon>Tracheophyta</taxon>
        <taxon>Spermatophyta</taxon>
        <taxon>Magnoliopsida</taxon>
        <taxon>eudicotyledons</taxon>
        <taxon>Gunneridae</taxon>
        <taxon>Pentapetalae</taxon>
        <taxon>rosids</taxon>
        <taxon>malvids</taxon>
        <taxon>Brassicales</taxon>
        <taxon>Brassicaceae</taxon>
        <taxon>Camelineae</taxon>
        <taxon>Arabidopsis</taxon>
    </lineage>
</organism>
<comment type="function">
    <text evidence="1">Disease resistance protein.</text>
</comment>
<comment type="domain">
    <text evidence="1">The LRR repeats probably act as specificity determinant of pathogen recognition.</text>
</comment>
<comment type="similarity">
    <text evidence="3">Belongs to the disease resistance NB-LRR family.</text>
</comment>
<comment type="online information" name="NIB-LRRS">
    <link uri="http://niblrrs.ucdavis.edu"/>
    <text>Functional and comparative genomics of disease resistance gene homologs</text>
</comment>
<keyword id="KW-0067">ATP-binding</keyword>
<keyword id="KW-0175">Coiled coil</keyword>
<keyword id="KW-0433">Leucine-rich repeat</keyword>
<keyword id="KW-0547">Nucleotide-binding</keyword>
<keyword id="KW-0611">Plant defense</keyword>
<keyword id="KW-1185">Reference proteome</keyword>
<keyword id="KW-0677">Repeat</keyword>
<accession>Q9T048</accession>
<accession>Q1PE47</accession>
<gene>
    <name type="ordered locus">At4g27190</name>
    <name type="ORF">T24A18.140</name>
</gene>
<reference key="1">
    <citation type="journal article" date="1999" name="Nature">
        <title>Sequence and analysis of chromosome 4 of the plant Arabidopsis thaliana.</title>
        <authorList>
            <person name="Mayer K.F.X."/>
            <person name="Schueller C."/>
            <person name="Wambutt R."/>
            <person name="Murphy G."/>
            <person name="Volckaert G."/>
            <person name="Pohl T."/>
            <person name="Duesterhoeft A."/>
            <person name="Stiekema W."/>
            <person name="Entian K.-D."/>
            <person name="Terryn N."/>
            <person name="Harris B."/>
            <person name="Ansorge W."/>
            <person name="Brandt P."/>
            <person name="Grivell L.A."/>
            <person name="Rieger M."/>
            <person name="Weichselgartner M."/>
            <person name="de Simone V."/>
            <person name="Obermaier B."/>
            <person name="Mache R."/>
            <person name="Mueller M."/>
            <person name="Kreis M."/>
            <person name="Delseny M."/>
            <person name="Puigdomenech P."/>
            <person name="Watson M."/>
            <person name="Schmidtheini T."/>
            <person name="Reichert B."/>
            <person name="Portetelle D."/>
            <person name="Perez-Alonso M."/>
            <person name="Boutry M."/>
            <person name="Bancroft I."/>
            <person name="Vos P."/>
            <person name="Hoheisel J."/>
            <person name="Zimmermann W."/>
            <person name="Wedler H."/>
            <person name="Ridley P."/>
            <person name="Langham S.-A."/>
            <person name="McCullagh B."/>
            <person name="Bilham L."/>
            <person name="Robben J."/>
            <person name="van der Schueren J."/>
            <person name="Grymonprez B."/>
            <person name="Chuang Y.-J."/>
            <person name="Vandenbussche F."/>
            <person name="Braeken M."/>
            <person name="Weltjens I."/>
            <person name="Voet M."/>
            <person name="Bastiaens I."/>
            <person name="Aert R."/>
            <person name="Defoor E."/>
            <person name="Weitzenegger T."/>
            <person name="Bothe G."/>
            <person name="Ramsperger U."/>
            <person name="Hilbert H."/>
            <person name="Braun M."/>
            <person name="Holzer E."/>
            <person name="Brandt A."/>
            <person name="Peters S."/>
            <person name="van Staveren M."/>
            <person name="Dirkse W."/>
            <person name="Mooijman P."/>
            <person name="Klein Lankhorst R."/>
            <person name="Rose M."/>
            <person name="Hauf J."/>
            <person name="Koetter P."/>
            <person name="Berneiser S."/>
            <person name="Hempel S."/>
            <person name="Feldpausch M."/>
            <person name="Lamberth S."/>
            <person name="Van den Daele H."/>
            <person name="De Keyser A."/>
            <person name="Buysshaert C."/>
            <person name="Gielen J."/>
            <person name="Villarroel R."/>
            <person name="De Clercq R."/>
            <person name="van Montagu M."/>
            <person name="Rogers J."/>
            <person name="Cronin A."/>
            <person name="Quail M.A."/>
            <person name="Bray-Allen S."/>
            <person name="Clark L."/>
            <person name="Doggett J."/>
            <person name="Hall S."/>
            <person name="Kay M."/>
            <person name="Lennard N."/>
            <person name="McLay K."/>
            <person name="Mayes R."/>
            <person name="Pettett A."/>
            <person name="Rajandream M.A."/>
            <person name="Lyne M."/>
            <person name="Benes V."/>
            <person name="Rechmann S."/>
            <person name="Borkova D."/>
            <person name="Bloecker H."/>
            <person name="Scharfe M."/>
            <person name="Grimm M."/>
            <person name="Loehnert T.-H."/>
            <person name="Dose S."/>
            <person name="de Haan M."/>
            <person name="Maarse A.C."/>
            <person name="Schaefer M."/>
            <person name="Mueller-Auer S."/>
            <person name="Gabel C."/>
            <person name="Fuchs M."/>
            <person name="Fartmann B."/>
            <person name="Granderath K."/>
            <person name="Dauner D."/>
            <person name="Herzl A."/>
            <person name="Neumann S."/>
            <person name="Argiriou A."/>
            <person name="Vitale D."/>
            <person name="Liguori R."/>
            <person name="Piravandi E."/>
            <person name="Massenet O."/>
            <person name="Quigley F."/>
            <person name="Clabauld G."/>
            <person name="Muendlein A."/>
            <person name="Felber R."/>
            <person name="Schnabl S."/>
            <person name="Hiller R."/>
            <person name="Schmidt W."/>
            <person name="Lecharny A."/>
            <person name="Aubourg S."/>
            <person name="Chefdor F."/>
            <person name="Cooke R."/>
            <person name="Berger C."/>
            <person name="Monfort A."/>
            <person name="Casacuberta E."/>
            <person name="Gibbons T."/>
            <person name="Weber N."/>
            <person name="Vandenbol M."/>
            <person name="Bargues M."/>
            <person name="Terol J."/>
            <person name="Torres A."/>
            <person name="Perez-Perez A."/>
            <person name="Purnelle B."/>
            <person name="Bent E."/>
            <person name="Johnson S."/>
            <person name="Tacon D."/>
            <person name="Jesse T."/>
            <person name="Heijnen L."/>
            <person name="Schwarz S."/>
            <person name="Scholler P."/>
            <person name="Heber S."/>
            <person name="Francs P."/>
            <person name="Bielke C."/>
            <person name="Frishman D."/>
            <person name="Haase D."/>
            <person name="Lemcke K."/>
            <person name="Mewes H.-W."/>
            <person name="Stocker S."/>
            <person name="Zaccaria P."/>
            <person name="Bevan M."/>
            <person name="Wilson R.K."/>
            <person name="de la Bastide M."/>
            <person name="Habermann K."/>
            <person name="Parnell L."/>
            <person name="Dedhia N."/>
            <person name="Gnoj L."/>
            <person name="Schutz K."/>
            <person name="Huang E."/>
            <person name="Spiegel L."/>
            <person name="Sekhon M."/>
            <person name="Murray J."/>
            <person name="Sheet P."/>
            <person name="Cordes M."/>
            <person name="Abu-Threideh J."/>
            <person name="Stoneking T."/>
            <person name="Kalicki J."/>
            <person name="Graves T."/>
            <person name="Harmon G."/>
            <person name="Edwards J."/>
            <person name="Latreille P."/>
            <person name="Courtney L."/>
            <person name="Cloud J."/>
            <person name="Abbott A."/>
            <person name="Scott K."/>
            <person name="Johnson D."/>
            <person name="Minx P."/>
            <person name="Bentley D."/>
            <person name="Fulton B."/>
            <person name="Miller N."/>
            <person name="Greco T."/>
            <person name="Kemp K."/>
            <person name="Kramer J."/>
            <person name="Fulton L."/>
            <person name="Mardis E."/>
            <person name="Dante M."/>
            <person name="Pepin K."/>
            <person name="Hillier L.W."/>
            <person name="Nelson J."/>
            <person name="Spieth J."/>
            <person name="Ryan E."/>
            <person name="Andrews S."/>
            <person name="Geisel C."/>
            <person name="Layman D."/>
            <person name="Du H."/>
            <person name="Ali J."/>
            <person name="Berghoff A."/>
            <person name="Jones K."/>
            <person name="Drone K."/>
            <person name="Cotton M."/>
            <person name="Joshu C."/>
            <person name="Antonoiu B."/>
            <person name="Zidanic M."/>
            <person name="Strong C."/>
            <person name="Sun H."/>
            <person name="Lamar B."/>
            <person name="Yordan C."/>
            <person name="Ma P."/>
            <person name="Zhong J."/>
            <person name="Preston R."/>
            <person name="Vil D."/>
            <person name="Shekher M."/>
            <person name="Matero A."/>
            <person name="Shah R."/>
            <person name="Swaby I.K."/>
            <person name="O'Shaughnessy A."/>
            <person name="Rodriguez M."/>
            <person name="Hoffman J."/>
            <person name="Till S."/>
            <person name="Granat S."/>
            <person name="Shohdy N."/>
            <person name="Hasegawa A."/>
            <person name="Hameed A."/>
            <person name="Lodhi M."/>
            <person name="Johnson A."/>
            <person name="Chen E."/>
            <person name="Marra M.A."/>
            <person name="Martienssen R."/>
            <person name="McCombie W.R."/>
        </authorList>
    </citation>
    <scope>NUCLEOTIDE SEQUENCE [LARGE SCALE GENOMIC DNA]</scope>
    <source>
        <strain>cv. Columbia</strain>
    </source>
</reference>
<reference key="2">
    <citation type="journal article" date="2017" name="Plant J.">
        <title>Araport11: a complete reannotation of the Arabidopsis thaliana reference genome.</title>
        <authorList>
            <person name="Cheng C.Y."/>
            <person name="Krishnakumar V."/>
            <person name="Chan A.P."/>
            <person name="Thibaud-Nissen F."/>
            <person name="Schobel S."/>
            <person name="Town C.D."/>
        </authorList>
    </citation>
    <scope>GENOME REANNOTATION</scope>
    <source>
        <strain>cv. Columbia</strain>
    </source>
</reference>
<reference key="3">
    <citation type="journal article" date="2006" name="Plant Biotechnol. J.">
        <title>Simultaneous high-throughput recombinational cloning of open reading frames in closed and open configurations.</title>
        <authorList>
            <person name="Underwood B.A."/>
            <person name="Vanderhaeghen R."/>
            <person name="Whitford R."/>
            <person name="Town C.D."/>
            <person name="Hilson P."/>
        </authorList>
    </citation>
    <scope>NUCLEOTIDE SEQUENCE [LARGE SCALE MRNA]</scope>
    <source>
        <strain>cv. Columbia</strain>
    </source>
</reference>
<evidence type="ECO:0000250" key="1"/>
<evidence type="ECO:0000255" key="2"/>
<evidence type="ECO:0000305" key="3"/>
<sequence length="985" mass="112947">MECCAPVIGEILRLMYESTFSRVANAIKFKSNVKALNESLERLTELKGNMSEDHETLLTKDKPLRLKLMRWQREAEEVISKARLKLEERVSCGMSLRPRMSRKLVKILDEVKMLEKDGIEFVDMLSVESTPERVEHVPGVSVVHQTMASNMLAKIRDGLTSEKAQKIGVWGMGGVGKTTLVRTLNNKLREEGATQPFGLVIFVIVSKEFDPREVQKQIAERLDIDTQMEESEEKLARRIYVGLMKERKFLLILDDVWKPIDLDLLGIPRTEENKGSKVILTSRFLEVCRSMKTDLDVRVDCLLEEDAWELFCKNAGDVVRSDHVRKIAKAVSQECGGLPLAIITVGTAMRGKKNVKLWNHVLSKLSKSVPWIKSIEEKIFQPLKLSYDFLEDKAKFCFLLCALFPEDYSIEVTEVVRYWMAEGFMEELGSQEDSMNEGITTVESLKDYCLLEDGDRRDTVKMHDVVRDFAIWIMSSSQDDSHSLVMSGTGLQDIRQDKLAPSLRRVSLMNNKLESLPDLVEEFCVKTSVLLLQGNFLLKEVPIGFLQAFPTLRILNLSGTRIKSFPSCSLLRLFSLHSLFLRDCFKLVKLPSLETLAKLELLDLCGTHILEFPRGLEELKRFRHLDLSRTLHLESIPARVVSRLSSLETLDMTSSHYRWSVQGETQKGQATVEEIGCLQRLQVLSIRLHSSPFLLNKRNTWIKRLKKFQLVVGSRYILRTRHDKRRLTISHLNVSQVSIGWLLAYTTSLALNHCQGIEAMMKKLVSDNKGFKNLKSLTIENVIINTNSWVEMVSTNTSKQSSDILDLLPNLEELHLRRVDLETFSELQTHLGLKLETLKIIEITMCRKLRTLLDKRNFLTIPNLEEIEISYCDSLQNLHEALLYHQPFVPNLRVLKLRNLPNLVSICNWGEVWECLEQVEVIHCNQLNCLPISSTCGRIKKIKGELSWWERLEWDDPSALTTVQPFFNPVREVPLLIADATTQML</sequence>
<protein>
    <recommendedName>
        <fullName>Disease resistance protein At4g27190</fullName>
    </recommendedName>
</protein>
<feature type="chain" id="PRO_0000212759" description="Disease resistance protein At4g27190">
    <location>
        <begin position="1"/>
        <end position="985"/>
    </location>
</feature>
<feature type="domain" description="NB-ARC">
    <location>
        <begin position="167"/>
        <end position="429"/>
    </location>
</feature>
<feature type="repeat" description="LRR 1">
    <location>
        <begin position="502"/>
        <end position="523"/>
    </location>
</feature>
<feature type="repeat" description="LRR 2">
    <location>
        <begin position="526"/>
        <end position="547"/>
    </location>
</feature>
<feature type="repeat" description="LRR 3">
    <location>
        <begin position="551"/>
        <end position="572"/>
    </location>
</feature>
<feature type="repeat" description="LRR 4">
    <location>
        <begin position="575"/>
        <end position="597"/>
    </location>
</feature>
<feature type="repeat" description="LRR 5">
    <location>
        <begin position="598"/>
        <end position="620"/>
    </location>
</feature>
<feature type="repeat" description="LRR 6">
    <location>
        <begin position="621"/>
        <end position="643"/>
    </location>
</feature>
<feature type="coiled-coil region" evidence="2">
    <location>
        <begin position="24"/>
        <end position="88"/>
    </location>
</feature>
<feature type="binding site" evidence="2">
    <location>
        <begin position="171"/>
        <end position="178"/>
    </location>
    <ligand>
        <name>ATP</name>
        <dbReference type="ChEBI" id="CHEBI:30616"/>
    </ligand>
</feature>
<name>DRL27_ARATH</name>
<proteinExistence type="evidence at transcript level"/>